<organism>
    <name type="scientific">Streptococcus mitis</name>
    <dbReference type="NCBI Taxonomy" id="28037"/>
    <lineage>
        <taxon>Bacteria</taxon>
        <taxon>Bacillati</taxon>
        <taxon>Bacillota</taxon>
        <taxon>Bacilli</taxon>
        <taxon>Lactobacillales</taxon>
        <taxon>Streptococcaceae</taxon>
        <taxon>Streptococcus</taxon>
        <taxon>Streptococcus mitis group</taxon>
    </lineage>
</organism>
<accession>O33686</accession>
<accession>O54253</accession>
<accession>O54254</accession>
<evidence type="ECO:0000250" key="1">
    <source>
        <dbReference type="UniProtKB" id="P80293"/>
    </source>
</evidence>
<evidence type="ECO:0000256" key="2">
    <source>
        <dbReference type="SAM" id="MobiDB-lite"/>
    </source>
</evidence>
<evidence type="ECO:0000305" key="3"/>
<protein>
    <recommendedName>
        <fullName>Superoxide dismutase [Mn/Fe]</fullName>
        <ecNumber evidence="1">1.15.1.1</ecNumber>
    </recommendedName>
</protein>
<reference key="1">
    <citation type="journal article" date="1998" name="J. Clin. Microbiol.">
        <title>Identification of streptococci to species level by sequencing the gene encoding the manganese-dependent superoxide dismutase.</title>
        <authorList>
            <person name="Poyart C."/>
            <person name="Quesne G."/>
            <person name="Coulon S."/>
            <person name="Berche P."/>
            <person name="Trieu-Cuot P."/>
        </authorList>
    </citation>
    <scope>NUCLEOTIDE SEQUENCE [GENOMIC DNA]</scope>
    <source>
        <strain>ATCC 49456 / DSM 12643 / LMG 14557 / NCTC 12261</strain>
        <strain>NEM1126</strain>
        <strain>NEM1222</strain>
    </source>
</reference>
<name>SODM_STRMT</name>
<proteinExistence type="inferred from homology"/>
<comment type="function">
    <text evidence="1">Destroys superoxide anion radicals which are normally produced within the cells and which are toxic to biological systems. Catalyzes the dismutation of superoxide anion radicals into O2 and H2O2 by successive reduction and oxidation of the transition metal ion at the active site.</text>
</comment>
<comment type="catalytic activity">
    <reaction evidence="1">
        <text>2 superoxide + 2 H(+) = H2O2 + O2</text>
        <dbReference type="Rhea" id="RHEA:20696"/>
        <dbReference type="ChEBI" id="CHEBI:15378"/>
        <dbReference type="ChEBI" id="CHEBI:15379"/>
        <dbReference type="ChEBI" id="CHEBI:16240"/>
        <dbReference type="ChEBI" id="CHEBI:18421"/>
        <dbReference type="EC" id="1.15.1.1"/>
    </reaction>
    <physiologicalReaction direction="left-to-right" evidence="1">
        <dbReference type="Rhea" id="RHEA:20697"/>
    </physiologicalReaction>
</comment>
<comment type="cofactor">
    <cofactor evidence="1">
        <name>Mn(2+)</name>
        <dbReference type="ChEBI" id="CHEBI:29035"/>
    </cofactor>
    <cofactor evidence="1">
        <name>Fe(3+)</name>
        <dbReference type="ChEBI" id="CHEBI:29034"/>
    </cofactor>
    <text evidence="1">Binds 1 Mn(2+) or Fe(3+) ion per subunit.</text>
</comment>
<comment type="similarity">
    <text evidence="3">Belongs to the iron/manganese superoxide dismutase family.</text>
</comment>
<keyword id="KW-0408">Iron</keyword>
<keyword id="KW-0464">Manganese</keyword>
<keyword id="KW-0479">Metal-binding</keyword>
<keyword id="KW-0560">Oxidoreductase</keyword>
<dbReference type="EC" id="1.15.1.1" evidence="1"/>
<dbReference type="EMBL" id="Z95909">
    <property type="protein sequence ID" value="CAB09362.1"/>
    <property type="molecule type" value="Genomic_DNA"/>
</dbReference>
<dbReference type="EMBL" id="Z99191">
    <property type="protein sequence ID" value="CAB16335.1"/>
    <property type="molecule type" value="Genomic_DNA"/>
</dbReference>
<dbReference type="EMBL" id="Z99192">
    <property type="protein sequence ID" value="CAB16336.1"/>
    <property type="molecule type" value="Genomic_DNA"/>
</dbReference>
<dbReference type="SMR" id="O33686"/>
<dbReference type="GO" id="GO:0005737">
    <property type="term" value="C:cytoplasm"/>
    <property type="evidence" value="ECO:0007669"/>
    <property type="project" value="TreeGrafter"/>
</dbReference>
<dbReference type="GO" id="GO:0046872">
    <property type="term" value="F:metal ion binding"/>
    <property type="evidence" value="ECO:0007669"/>
    <property type="project" value="UniProtKB-KW"/>
</dbReference>
<dbReference type="GO" id="GO:0004784">
    <property type="term" value="F:superoxide dismutase activity"/>
    <property type="evidence" value="ECO:0007669"/>
    <property type="project" value="UniProtKB-EC"/>
</dbReference>
<dbReference type="FunFam" id="1.10.287.990:FF:000001">
    <property type="entry name" value="Superoxide dismutase"/>
    <property type="match status" value="1"/>
</dbReference>
<dbReference type="Gene3D" id="1.10.287.990">
    <property type="entry name" value="Fe,Mn superoxide dismutase (SOD) domain"/>
    <property type="match status" value="1"/>
</dbReference>
<dbReference type="Gene3D" id="3.55.40.20">
    <property type="entry name" value="Iron/manganese superoxide dismutase, C-terminal domain"/>
    <property type="match status" value="1"/>
</dbReference>
<dbReference type="InterPro" id="IPR001189">
    <property type="entry name" value="Mn/Fe_SOD"/>
</dbReference>
<dbReference type="InterPro" id="IPR019832">
    <property type="entry name" value="Mn/Fe_SOD_C"/>
</dbReference>
<dbReference type="InterPro" id="IPR019831">
    <property type="entry name" value="Mn/Fe_SOD_N"/>
</dbReference>
<dbReference type="InterPro" id="IPR036324">
    <property type="entry name" value="Mn/Fe_SOD_N_sf"/>
</dbReference>
<dbReference type="InterPro" id="IPR036314">
    <property type="entry name" value="SOD_C_sf"/>
</dbReference>
<dbReference type="PANTHER" id="PTHR43595">
    <property type="entry name" value="37S RIBOSOMAL PROTEIN S26, MITOCHONDRIAL"/>
    <property type="match status" value="1"/>
</dbReference>
<dbReference type="PANTHER" id="PTHR43595:SF2">
    <property type="entry name" value="SMALL RIBOSOMAL SUBUNIT PROTEIN MS42"/>
    <property type="match status" value="1"/>
</dbReference>
<dbReference type="Pfam" id="PF02777">
    <property type="entry name" value="Sod_Fe_C"/>
    <property type="match status" value="1"/>
</dbReference>
<dbReference type="Pfam" id="PF00081">
    <property type="entry name" value="Sod_Fe_N"/>
    <property type="match status" value="1"/>
</dbReference>
<dbReference type="PRINTS" id="PR01703">
    <property type="entry name" value="MNSODISMTASE"/>
</dbReference>
<dbReference type="SUPFAM" id="SSF54719">
    <property type="entry name" value="Fe,Mn superoxide dismutase (SOD), C-terminal domain"/>
    <property type="match status" value="1"/>
</dbReference>
<dbReference type="SUPFAM" id="SSF46609">
    <property type="entry name" value="Fe,Mn superoxide dismutase (SOD), N-terminal domain"/>
    <property type="match status" value="1"/>
</dbReference>
<gene>
    <name type="primary">sodA</name>
</gene>
<sequence length="145" mass="15731">YIDAETMHLHHDKHHQTYVNNANAALEKHPEIGEDLEALLADVESIPADIRQALINNGGGHLNHALFWELMTPEKTAPSAELAAAIDATFGSFEEFQAAFTAAATTRFGSGWAWLVVNKEGKLEVTSTANQDTPISEGKKPILGL</sequence>
<feature type="chain" id="PRO_0000160093" description="Superoxide dismutase [Mn/Fe]">
    <location>
        <begin position="1" status="less than"/>
        <end position="145" status="greater than"/>
    </location>
</feature>
<feature type="region of interest" description="Disordered" evidence="2">
    <location>
        <begin position="126"/>
        <end position="145"/>
    </location>
</feature>
<feature type="binding site" evidence="1">
    <location>
        <position position="10"/>
    </location>
    <ligand>
        <name>Fe(3+)</name>
        <dbReference type="ChEBI" id="CHEBI:29034"/>
    </ligand>
</feature>
<feature type="binding site" evidence="1">
    <location>
        <position position="10"/>
    </location>
    <ligand>
        <name>Mn(2+)</name>
        <dbReference type="ChEBI" id="CHEBI:29035"/>
    </ligand>
</feature>
<feature type="binding site" evidence="1">
    <location>
        <position position="64"/>
    </location>
    <ligand>
        <name>Fe(3+)</name>
        <dbReference type="ChEBI" id="CHEBI:29034"/>
    </ligand>
</feature>
<feature type="binding site" evidence="1">
    <location>
        <position position="64"/>
    </location>
    <ligand>
        <name>Mn(2+)</name>
        <dbReference type="ChEBI" id="CHEBI:29035"/>
    </ligand>
</feature>
<feature type="sequence variant" description="In strain: NEM1126.">
    <original>A</original>
    <variation>T</variation>
    <location>
        <position position="48"/>
    </location>
</feature>
<feature type="sequence variant" description="In strain: NEM1126.">
    <original>E</original>
    <variation>D</variation>
    <location>
        <position position="95"/>
    </location>
</feature>
<feature type="sequence variant" description="In strain: NEM1222.">
    <original>A</original>
    <variation>T</variation>
    <location>
        <position position="98"/>
    </location>
</feature>
<feature type="non-terminal residue">
    <location>
        <position position="1"/>
    </location>
</feature>
<feature type="non-terminal residue">
    <location>
        <position position="145"/>
    </location>
</feature>